<accession>A7ZML6</accession>
<organism>
    <name type="scientific">Escherichia coli O139:H28 (strain E24377A / ETEC)</name>
    <dbReference type="NCBI Taxonomy" id="331111"/>
    <lineage>
        <taxon>Bacteria</taxon>
        <taxon>Pseudomonadati</taxon>
        <taxon>Pseudomonadota</taxon>
        <taxon>Gammaproteobacteria</taxon>
        <taxon>Enterobacterales</taxon>
        <taxon>Enterobacteriaceae</taxon>
        <taxon>Escherichia</taxon>
    </lineage>
</organism>
<reference key="1">
    <citation type="journal article" date="2008" name="J. Bacteriol.">
        <title>The pangenome structure of Escherichia coli: comparative genomic analysis of E. coli commensal and pathogenic isolates.</title>
        <authorList>
            <person name="Rasko D.A."/>
            <person name="Rosovitz M.J."/>
            <person name="Myers G.S.A."/>
            <person name="Mongodin E.F."/>
            <person name="Fricke W.F."/>
            <person name="Gajer P."/>
            <person name="Crabtree J."/>
            <person name="Sebaihia M."/>
            <person name="Thomson N.R."/>
            <person name="Chaudhuri R."/>
            <person name="Henderson I.R."/>
            <person name="Sperandio V."/>
            <person name="Ravel J."/>
        </authorList>
    </citation>
    <scope>NUCLEOTIDE SEQUENCE [LARGE SCALE GENOMIC DNA]</scope>
    <source>
        <strain>E24377A / ETEC</strain>
    </source>
</reference>
<evidence type="ECO:0000255" key="1">
    <source>
        <dbReference type="HAMAP-Rule" id="MF_01173"/>
    </source>
</evidence>
<comment type="function">
    <text evidence="1">Catalyzes the transamination of N(2)-succinylornithine and alpha-ketoglutarate into N(2)-succinylglutamate semialdehyde and glutamate. Can also act as an acetylornithine aminotransferase.</text>
</comment>
<comment type="catalytic activity">
    <reaction evidence="1">
        <text>N(2)-succinyl-L-ornithine + 2-oxoglutarate = N-succinyl-L-glutamate 5-semialdehyde + L-glutamate</text>
        <dbReference type="Rhea" id="RHEA:16953"/>
        <dbReference type="ChEBI" id="CHEBI:16810"/>
        <dbReference type="ChEBI" id="CHEBI:29985"/>
        <dbReference type="ChEBI" id="CHEBI:58514"/>
        <dbReference type="ChEBI" id="CHEBI:58520"/>
        <dbReference type="EC" id="2.6.1.81"/>
    </reaction>
</comment>
<comment type="cofactor">
    <cofactor evidence="1">
        <name>pyridoxal 5'-phosphate</name>
        <dbReference type="ChEBI" id="CHEBI:597326"/>
    </cofactor>
</comment>
<comment type="pathway">
    <text evidence="1">Amino-acid degradation; L-arginine degradation via AST pathway; L-glutamate and succinate from L-arginine: step 3/5.</text>
</comment>
<comment type="similarity">
    <text evidence="1">Belongs to the class-III pyridoxal-phosphate-dependent aminotransferase family. AstC subfamily.</text>
</comment>
<feature type="chain" id="PRO_1000164373" description="Succinylornithine transaminase">
    <location>
        <begin position="1"/>
        <end position="406"/>
    </location>
</feature>
<feature type="modified residue" description="N6-(pyridoxal phosphate)lysine" evidence="1">
    <location>
        <position position="252"/>
    </location>
</feature>
<proteinExistence type="inferred from homology"/>
<name>ASTC_ECO24</name>
<keyword id="KW-0032">Aminotransferase</keyword>
<keyword id="KW-0056">Arginine metabolism</keyword>
<keyword id="KW-0663">Pyridoxal phosphate</keyword>
<keyword id="KW-1185">Reference proteome</keyword>
<keyword id="KW-0808">Transferase</keyword>
<gene>
    <name evidence="1" type="primary">astC</name>
    <name evidence="1" type="synonym">argM</name>
    <name type="ordered locus">EcE24377A_1970</name>
</gene>
<protein>
    <recommendedName>
        <fullName evidence="1">Succinylornithine transaminase</fullName>
        <ecNumber evidence="1">2.6.1.81</ecNumber>
    </recommendedName>
    <alternativeName>
        <fullName evidence="1">Succinylornithine aminotransferase</fullName>
    </alternativeName>
</protein>
<dbReference type="EC" id="2.6.1.81" evidence="1"/>
<dbReference type="EMBL" id="CP000800">
    <property type="protein sequence ID" value="ABV19758.1"/>
    <property type="molecule type" value="Genomic_DNA"/>
</dbReference>
<dbReference type="RefSeq" id="WP_000081983.1">
    <property type="nucleotide sequence ID" value="NC_009801.1"/>
</dbReference>
<dbReference type="SMR" id="A7ZML6"/>
<dbReference type="GeneID" id="75203054"/>
<dbReference type="KEGG" id="ecw:EcE24377A_1970"/>
<dbReference type="HOGENOM" id="CLU_016922_10_1_6"/>
<dbReference type="UniPathway" id="UPA00185">
    <property type="reaction ID" value="UER00281"/>
</dbReference>
<dbReference type="Proteomes" id="UP000001122">
    <property type="component" value="Chromosome"/>
</dbReference>
<dbReference type="GO" id="GO:0042802">
    <property type="term" value="F:identical protein binding"/>
    <property type="evidence" value="ECO:0007669"/>
    <property type="project" value="TreeGrafter"/>
</dbReference>
<dbReference type="GO" id="GO:0030170">
    <property type="term" value="F:pyridoxal phosphate binding"/>
    <property type="evidence" value="ECO:0007669"/>
    <property type="project" value="UniProtKB-UniRule"/>
</dbReference>
<dbReference type="GO" id="GO:0043825">
    <property type="term" value="F:succinylornithine transaminase activity"/>
    <property type="evidence" value="ECO:0007669"/>
    <property type="project" value="UniProtKB-EC"/>
</dbReference>
<dbReference type="GO" id="GO:1901607">
    <property type="term" value="P:alpha-amino acid biosynthetic process"/>
    <property type="evidence" value="ECO:0007669"/>
    <property type="project" value="UniProtKB-ARBA"/>
</dbReference>
<dbReference type="GO" id="GO:0019544">
    <property type="term" value="P:arginine catabolic process to glutamate"/>
    <property type="evidence" value="ECO:0007669"/>
    <property type="project" value="UniProtKB-UniRule"/>
</dbReference>
<dbReference type="GO" id="GO:0019545">
    <property type="term" value="P:arginine catabolic process to succinate"/>
    <property type="evidence" value="ECO:0007669"/>
    <property type="project" value="UniProtKB-UniRule"/>
</dbReference>
<dbReference type="GO" id="GO:0006593">
    <property type="term" value="P:ornithine catabolic process"/>
    <property type="evidence" value="ECO:0007669"/>
    <property type="project" value="InterPro"/>
</dbReference>
<dbReference type="CDD" id="cd00610">
    <property type="entry name" value="OAT_like"/>
    <property type="match status" value="1"/>
</dbReference>
<dbReference type="FunFam" id="3.40.640.10:FF:000004">
    <property type="entry name" value="Acetylornithine aminotransferase"/>
    <property type="match status" value="1"/>
</dbReference>
<dbReference type="FunFam" id="3.90.1150.10:FF:000009">
    <property type="entry name" value="Succinylornithine transaminase"/>
    <property type="match status" value="1"/>
</dbReference>
<dbReference type="Gene3D" id="3.90.1150.10">
    <property type="entry name" value="Aspartate Aminotransferase, domain 1"/>
    <property type="match status" value="1"/>
</dbReference>
<dbReference type="Gene3D" id="3.40.640.10">
    <property type="entry name" value="Type I PLP-dependent aspartate aminotransferase-like (Major domain)"/>
    <property type="match status" value="1"/>
</dbReference>
<dbReference type="HAMAP" id="MF_01107">
    <property type="entry name" value="ArgD_aminotrans_3"/>
    <property type="match status" value="1"/>
</dbReference>
<dbReference type="HAMAP" id="MF_01173">
    <property type="entry name" value="AstC_aminotrans_3"/>
    <property type="match status" value="1"/>
</dbReference>
<dbReference type="InterPro" id="IPR017652">
    <property type="entry name" value="Ac/SucOrn_transaminase_bac"/>
</dbReference>
<dbReference type="InterPro" id="IPR004636">
    <property type="entry name" value="AcOrn/SuccOrn_fam"/>
</dbReference>
<dbReference type="InterPro" id="IPR005814">
    <property type="entry name" value="Aminotrans_3"/>
</dbReference>
<dbReference type="InterPro" id="IPR049704">
    <property type="entry name" value="Aminotrans_3_PPA_site"/>
</dbReference>
<dbReference type="InterPro" id="IPR050103">
    <property type="entry name" value="Class-III_PLP-dep_AT"/>
</dbReference>
<dbReference type="InterPro" id="IPR015424">
    <property type="entry name" value="PyrdxlP-dep_Trfase"/>
</dbReference>
<dbReference type="InterPro" id="IPR015421">
    <property type="entry name" value="PyrdxlP-dep_Trfase_major"/>
</dbReference>
<dbReference type="InterPro" id="IPR015422">
    <property type="entry name" value="PyrdxlP-dep_Trfase_small"/>
</dbReference>
<dbReference type="InterPro" id="IPR026330">
    <property type="entry name" value="SOAT"/>
</dbReference>
<dbReference type="NCBIfam" id="TIGR03246">
    <property type="entry name" value="arg_catab_astC"/>
    <property type="match status" value="1"/>
</dbReference>
<dbReference type="NCBIfam" id="TIGR00707">
    <property type="entry name" value="argD"/>
    <property type="match status" value="1"/>
</dbReference>
<dbReference type="NCBIfam" id="NF002325">
    <property type="entry name" value="PRK01278.1"/>
    <property type="match status" value="1"/>
</dbReference>
<dbReference type="NCBIfam" id="NF003468">
    <property type="entry name" value="PRK05093.1"/>
    <property type="match status" value="1"/>
</dbReference>
<dbReference type="NCBIfam" id="NF009047">
    <property type="entry name" value="PRK12381.1"/>
    <property type="match status" value="1"/>
</dbReference>
<dbReference type="PANTHER" id="PTHR11986">
    <property type="entry name" value="AMINOTRANSFERASE CLASS III"/>
    <property type="match status" value="1"/>
</dbReference>
<dbReference type="PANTHER" id="PTHR11986:SF113">
    <property type="entry name" value="SUCCINYLORNITHINE TRANSAMINASE"/>
    <property type="match status" value="1"/>
</dbReference>
<dbReference type="Pfam" id="PF00202">
    <property type="entry name" value="Aminotran_3"/>
    <property type="match status" value="1"/>
</dbReference>
<dbReference type="PIRSF" id="PIRSF000521">
    <property type="entry name" value="Transaminase_4ab_Lys_Orn"/>
    <property type="match status" value="1"/>
</dbReference>
<dbReference type="SUPFAM" id="SSF53383">
    <property type="entry name" value="PLP-dependent transferases"/>
    <property type="match status" value="1"/>
</dbReference>
<dbReference type="PROSITE" id="PS00600">
    <property type="entry name" value="AA_TRANSFER_CLASS_3"/>
    <property type="match status" value="1"/>
</dbReference>
<sequence length="406" mass="43665">MSQPITRENFDEWMIPVYAPAPFIPVRGEGSRLWDQQGKEYIDFAGGIAVNALGHAHPELREALNEQASKFWHTGNGYTNEPVLRLAKKLIDATFADRVFFCNSGAEANEAALKLARKFAHDRYGSHKSGIVAFKNAFHGRTLFTVSAGGQPAYSQDFAPLPADIRHAAYNDINSASALIDDSTCAVIVEPIQGEGGVVPASNAFLQGLRELCNRHNALLIFDEVQTGVGRTGELYAYMHYGVTPDLLTTAKALGGGFPVGALLATEECARVMTVGTHGTTYGGNPLASAVAGKVLELINTPEMLNGVKQRHDWFVERLNTINHRYGLFSEVRGLGLLIGCVLNADYAGQAKQISQEAAKAGVMVLIAGGNVVRFAPALNVSEEEVTTGLDRFAAACEHFVSRGSS</sequence>